<sequence length="185" mass="19647">MADSHGNAKGATAHTEAGGGHKAPFPPFQKDTFASQLVSLTIAFVALYLISSRLALPRVRKTIDDRQNKIEGDIAQAQTLKNESDAALKAYEVELAAARTRAQAIGNETREKLNAEADTERKALEKRLSAKLADAEKTIASTRTAAMSNVRGIASDAATAIVQQLTGAMPDRKLVDSAVEASMKG</sequence>
<protein>
    <recommendedName>
        <fullName>ATP synthase subunit b 2</fullName>
    </recommendedName>
    <alternativeName>
        <fullName>ATP synthase F(0) sector subunit b 2</fullName>
    </alternativeName>
    <alternativeName>
        <fullName>ATPase subunit I 2</fullName>
    </alternativeName>
    <alternativeName>
        <fullName>F-type ATPase subunit b 2</fullName>
        <shortName>F-ATPase subunit b 2</shortName>
    </alternativeName>
</protein>
<feature type="chain" id="PRO_0000369016" description="ATP synthase subunit b 2">
    <location>
        <begin position="1"/>
        <end position="185"/>
    </location>
</feature>
<feature type="transmembrane region" description="Helical" evidence="2">
    <location>
        <begin position="34"/>
        <end position="56"/>
    </location>
</feature>
<feature type="region of interest" description="Disordered" evidence="3">
    <location>
        <begin position="1"/>
        <end position="24"/>
    </location>
</feature>
<keyword id="KW-0066">ATP synthesis</keyword>
<keyword id="KW-0997">Cell inner membrane</keyword>
<keyword id="KW-1003">Cell membrane</keyword>
<keyword id="KW-0138">CF(0)</keyword>
<keyword id="KW-0375">Hydrogen ion transport</keyword>
<keyword id="KW-0406">Ion transport</keyword>
<keyword id="KW-0472">Membrane</keyword>
<keyword id="KW-1185">Reference proteome</keyword>
<keyword id="KW-0812">Transmembrane</keyword>
<keyword id="KW-1133">Transmembrane helix</keyword>
<keyword id="KW-0813">Transport</keyword>
<reference key="1">
    <citation type="submission" date="2006-03" db="EMBL/GenBank/DDBJ databases">
        <title>Complete sequence of chromosome of Nitrobacter hamburgensis X14.</title>
        <authorList>
            <consortium name="US DOE Joint Genome Institute"/>
            <person name="Copeland A."/>
            <person name="Lucas S."/>
            <person name="Lapidus A."/>
            <person name="Barry K."/>
            <person name="Detter J.C."/>
            <person name="Glavina del Rio T."/>
            <person name="Hammon N."/>
            <person name="Israni S."/>
            <person name="Dalin E."/>
            <person name="Tice H."/>
            <person name="Pitluck S."/>
            <person name="Chain P."/>
            <person name="Malfatti S."/>
            <person name="Shin M."/>
            <person name="Vergez L."/>
            <person name="Schmutz J."/>
            <person name="Larimer F."/>
            <person name="Land M."/>
            <person name="Hauser L."/>
            <person name="Kyrpides N."/>
            <person name="Ivanova N."/>
            <person name="Ward B."/>
            <person name="Arp D."/>
            <person name="Klotz M."/>
            <person name="Stein L."/>
            <person name="O'Mullan G."/>
            <person name="Starkenburg S."/>
            <person name="Sayavedra L."/>
            <person name="Poret-Peterson A.T."/>
            <person name="Gentry M.E."/>
            <person name="Bruce D."/>
            <person name="Richardson P."/>
        </authorList>
    </citation>
    <scope>NUCLEOTIDE SEQUENCE [LARGE SCALE GENOMIC DNA]</scope>
    <source>
        <strain>DSM 10229 / NCIMB 13809 / X14</strain>
    </source>
</reference>
<comment type="function">
    <text evidence="1">F(1)F(0) ATP synthase produces ATP from ADP in the presence of a proton or sodium gradient. F-type ATPases consist of two structural domains, F(1) containing the extramembraneous catalytic core and F(0) containing the membrane proton channel, linked together by a central stalk and a peripheral stalk. During catalysis, ATP synthesis in the catalytic domain of F(1) is coupled via a rotary mechanism of the central stalk subunits to proton translocation (By similarity).</text>
</comment>
<comment type="function">
    <text evidence="1">Component of the F(0) channel, it forms part of the peripheral stalk, linking F(1) to F(0). The b'-subunit is a diverged and duplicated form of b found in plants and photosynthetic bacteria (By similarity).</text>
</comment>
<comment type="subunit">
    <text evidence="1">F-type ATPases have 2 components, F(1) - the catalytic core - and F(0) - the membrane proton channel. F(1) has five subunits: alpha(3), beta(3), gamma(1), delta(1), epsilon(1). F(0) has three main subunits: a(1), b(2) and c(10-14). The alpha and beta chains form an alternating ring which encloses part of the gamma chain. F(1) is attached to F(0) by a central stalk formed by the gamma and epsilon chains, while a peripheral stalk is formed by the delta and b chains (By similarity).</text>
</comment>
<comment type="subcellular location">
    <subcellularLocation>
        <location evidence="1">Cell inner membrane</location>
        <topology evidence="1">Single-pass membrane protein</topology>
    </subcellularLocation>
</comment>
<comment type="similarity">
    <text evidence="4">Belongs to the ATPase B chain family.</text>
</comment>
<evidence type="ECO:0000250" key="1"/>
<evidence type="ECO:0000255" key="2"/>
<evidence type="ECO:0000256" key="3">
    <source>
        <dbReference type="SAM" id="MobiDB-lite"/>
    </source>
</evidence>
<evidence type="ECO:0000305" key="4"/>
<dbReference type="EMBL" id="CP000319">
    <property type="protein sequence ID" value="ABE61167.1"/>
    <property type="molecule type" value="Genomic_DNA"/>
</dbReference>
<dbReference type="RefSeq" id="WP_011508871.1">
    <property type="nucleotide sequence ID" value="NC_007964.1"/>
</dbReference>
<dbReference type="SMR" id="Q1QRI0"/>
<dbReference type="STRING" id="323097.Nham_0267"/>
<dbReference type="KEGG" id="nha:Nham_0267"/>
<dbReference type="eggNOG" id="COG0711">
    <property type="taxonomic scope" value="Bacteria"/>
</dbReference>
<dbReference type="HOGENOM" id="CLU_079215_1_2_5"/>
<dbReference type="OrthoDB" id="9805716at2"/>
<dbReference type="Proteomes" id="UP000001953">
    <property type="component" value="Chromosome"/>
</dbReference>
<dbReference type="GO" id="GO:0005886">
    <property type="term" value="C:plasma membrane"/>
    <property type="evidence" value="ECO:0007669"/>
    <property type="project" value="UniProtKB-SubCell"/>
</dbReference>
<dbReference type="GO" id="GO:0045259">
    <property type="term" value="C:proton-transporting ATP synthase complex"/>
    <property type="evidence" value="ECO:0007669"/>
    <property type="project" value="UniProtKB-KW"/>
</dbReference>
<dbReference type="GO" id="GO:0046933">
    <property type="term" value="F:proton-transporting ATP synthase activity, rotational mechanism"/>
    <property type="evidence" value="ECO:0007669"/>
    <property type="project" value="UniProtKB-UniRule"/>
</dbReference>
<dbReference type="GO" id="GO:0046961">
    <property type="term" value="F:proton-transporting ATPase activity, rotational mechanism"/>
    <property type="evidence" value="ECO:0007669"/>
    <property type="project" value="TreeGrafter"/>
</dbReference>
<dbReference type="CDD" id="cd06503">
    <property type="entry name" value="ATP-synt_Fo_b"/>
    <property type="match status" value="1"/>
</dbReference>
<dbReference type="HAMAP" id="MF_01398">
    <property type="entry name" value="ATP_synth_b_bprime"/>
    <property type="match status" value="1"/>
</dbReference>
<dbReference type="InterPro" id="IPR002146">
    <property type="entry name" value="ATP_synth_b/b'su_bac/chlpt"/>
</dbReference>
<dbReference type="InterPro" id="IPR050059">
    <property type="entry name" value="ATP_synthase_B_chain"/>
</dbReference>
<dbReference type="PANTHER" id="PTHR33445:SF1">
    <property type="entry name" value="ATP SYNTHASE SUBUNIT B"/>
    <property type="match status" value="1"/>
</dbReference>
<dbReference type="PANTHER" id="PTHR33445">
    <property type="entry name" value="ATP SYNTHASE SUBUNIT B', CHLOROPLASTIC"/>
    <property type="match status" value="1"/>
</dbReference>
<dbReference type="Pfam" id="PF00430">
    <property type="entry name" value="ATP-synt_B"/>
    <property type="match status" value="1"/>
</dbReference>
<name>ATPF2_NITHX</name>
<accession>Q1QRI0</accession>
<proteinExistence type="inferred from homology"/>
<organism>
    <name type="scientific">Nitrobacter hamburgensis (strain DSM 10229 / NCIMB 13809 / X14)</name>
    <dbReference type="NCBI Taxonomy" id="323097"/>
    <lineage>
        <taxon>Bacteria</taxon>
        <taxon>Pseudomonadati</taxon>
        <taxon>Pseudomonadota</taxon>
        <taxon>Alphaproteobacteria</taxon>
        <taxon>Hyphomicrobiales</taxon>
        <taxon>Nitrobacteraceae</taxon>
        <taxon>Nitrobacter</taxon>
    </lineage>
</organism>
<gene>
    <name type="primary">atpF2</name>
    <name type="synonym">atpG</name>
    <name type="ordered locus">Nham_0267</name>
</gene>